<name>LGT_ACIBC</name>
<reference key="1">
    <citation type="journal article" date="2008" name="Antimicrob. Agents Chemother.">
        <title>Whole-genome pyrosequencing of an epidemic multidrug-resistant Acinetobacter baumannii strain belonging to the European clone II group.</title>
        <authorList>
            <person name="Iacono M."/>
            <person name="Villa L."/>
            <person name="Fortini D."/>
            <person name="Bordoni R."/>
            <person name="Imperi F."/>
            <person name="Bonnal R.J."/>
            <person name="Sicheritz-Ponten T."/>
            <person name="De Bellis G."/>
            <person name="Visca P."/>
            <person name="Cassone A."/>
            <person name="Carattoli A."/>
        </authorList>
    </citation>
    <scope>NUCLEOTIDE SEQUENCE [LARGE SCALE GENOMIC DNA]</scope>
    <source>
        <strain>ACICU</strain>
    </source>
</reference>
<protein>
    <recommendedName>
        <fullName evidence="1">Phosphatidylglycerol--prolipoprotein diacylglyceryl transferase</fullName>
        <ecNumber evidence="1">2.5.1.145</ecNumber>
    </recommendedName>
</protein>
<dbReference type="EC" id="2.5.1.145" evidence="1"/>
<dbReference type="EMBL" id="CP000863">
    <property type="protein sequence ID" value="ACC55783.1"/>
    <property type="molecule type" value="Genomic_DNA"/>
</dbReference>
<dbReference type="RefSeq" id="WP_000959084.1">
    <property type="nucleotide sequence ID" value="NZ_CP031380.1"/>
</dbReference>
<dbReference type="SMR" id="B2I3A5"/>
<dbReference type="GeneID" id="92892455"/>
<dbReference type="KEGG" id="abc:ACICU_00471"/>
<dbReference type="HOGENOM" id="CLU_013386_1_0_6"/>
<dbReference type="UniPathway" id="UPA00664"/>
<dbReference type="Proteomes" id="UP000008839">
    <property type="component" value="Chromosome"/>
</dbReference>
<dbReference type="GO" id="GO:0005886">
    <property type="term" value="C:plasma membrane"/>
    <property type="evidence" value="ECO:0007669"/>
    <property type="project" value="UniProtKB-SubCell"/>
</dbReference>
<dbReference type="GO" id="GO:0008961">
    <property type="term" value="F:phosphatidylglycerol-prolipoprotein diacylglyceryl transferase activity"/>
    <property type="evidence" value="ECO:0007669"/>
    <property type="project" value="UniProtKB-UniRule"/>
</dbReference>
<dbReference type="GO" id="GO:0042158">
    <property type="term" value="P:lipoprotein biosynthetic process"/>
    <property type="evidence" value="ECO:0007669"/>
    <property type="project" value="UniProtKB-UniRule"/>
</dbReference>
<dbReference type="HAMAP" id="MF_01147">
    <property type="entry name" value="Lgt"/>
    <property type="match status" value="1"/>
</dbReference>
<dbReference type="InterPro" id="IPR001640">
    <property type="entry name" value="Lgt"/>
</dbReference>
<dbReference type="NCBIfam" id="TIGR00544">
    <property type="entry name" value="lgt"/>
    <property type="match status" value="1"/>
</dbReference>
<dbReference type="PANTHER" id="PTHR30589:SF0">
    <property type="entry name" value="PHOSPHATIDYLGLYCEROL--PROLIPOPROTEIN DIACYLGLYCERYL TRANSFERASE"/>
    <property type="match status" value="1"/>
</dbReference>
<dbReference type="PANTHER" id="PTHR30589">
    <property type="entry name" value="PROLIPOPROTEIN DIACYLGLYCERYL TRANSFERASE"/>
    <property type="match status" value="1"/>
</dbReference>
<dbReference type="Pfam" id="PF01790">
    <property type="entry name" value="LGT"/>
    <property type="match status" value="1"/>
</dbReference>
<dbReference type="PROSITE" id="PS01311">
    <property type="entry name" value="LGT"/>
    <property type="match status" value="1"/>
</dbReference>
<gene>
    <name evidence="1" type="primary">lgt</name>
    <name type="ordered locus">ACICU_00471</name>
</gene>
<comment type="function">
    <text evidence="1">Catalyzes the transfer of the diacylglyceryl group from phosphatidylglycerol to the sulfhydryl group of the N-terminal cysteine of a prolipoprotein, the first step in the formation of mature lipoproteins.</text>
</comment>
<comment type="catalytic activity">
    <reaction evidence="1">
        <text>L-cysteinyl-[prolipoprotein] + a 1,2-diacyl-sn-glycero-3-phospho-(1'-sn-glycerol) = an S-1,2-diacyl-sn-glyceryl-L-cysteinyl-[prolipoprotein] + sn-glycerol 1-phosphate + H(+)</text>
        <dbReference type="Rhea" id="RHEA:56712"/>
        <dbReference type="Rhea" id="RHEA-COMP:14679"/>
        <dbReference type="Rhea" id="RHEA-COMP:14680"/>
        <dbReference type="ChEBI" id="CHEBI:15378"/>
        <dbReference type="ChEBI" id="CHEBI:29950"/>
        <dbReference type="ChEBI" id="CHEBI:57685"/>
        <dbReference type="ChEBI" id="CHEBI:64716"/>
        <dbReference type="ChEBI" id="CHEBI:140658"/>
        <dbReference type="EC" id="2.5.1.145"/>
    </reaction>
</comment>
<comment type="pathway">
    <text evidence="1">Protein modification; lipoprotein biosynthesis (diacylglyceryl transfer).</text>
</comment>
<comment type="subcellular location">
    <subcellularLocation>
        <location evidence="1">Cell inner membrane</location>
        <topology evidence="1">Multi-pass membrane protein</topology>
    </subcellularLocation>
</comment>
<comment type="similarity">
    <text evidence="1">Belongs to the Lgt family.</text>
</comment>
<evidence type="ECO:0000255" key="1">
    <source>
        <dbReference type="HAMAP-Rule" id="MF_01147"/>
    </source>
</evidence>
<organism>
    <name type="scientific">Acinetobacter baumannii (strain ACICU)</name>
    <dbReference type="NCBI Taxonomy" id="405416"/>
    <lineage>
        <taxon>Bacteria</taxon>
        <taxon>Pseudomonadati</taxon>
        <taxon>Pseudomonadota</taxon>
        <taxon>Gammaproteobacteria</taxon>
        <taxon>Moraxellales</taxon>
        <taxon>Moraxellaceae</taxon>
        <taxon>Acinetobacter</taxon>
        <taxon>Acinetobacter calcoaceticus/baumannii complex</taxon>
    </lineage>
</organism>
<keyword id="KW-0997">Cell inner membrane</keyword>
<keyword id="KW-1003">Cell membrane</keyword>
<keyword id="KW-0472">Membrane</keyword>
<keyword id="KW-0808">Transferase</keyword>
<keyword id="KW-0812">Transmembrane</keyword>
<keyword id="KW-1133">Transmembrane helix</keyword>
<accession>B2I3A5</accession>
<feature type="chain" id="PRO_1000137390" description="Phosphatidylglycerol--prolipoprotein diacylglyceryl transferase">
    <location>
        <begin position="1"/>
        <end position="272"/>
    </location>
</feature>
<feature type="transmembrane region" description="Helical" evidence="1">
    <location>
        <begin position="17"/>
        <end position="37"/>
    </location>
</feature>
<feature type="transmembrane region" description="Helical" evidence="1">
    <location>
        <begin position="55"/>
        <end position="75"/>
    </location>
</feature>
<feature type="transmembrane region" description="Helical" evidence="1">
    <location>
        <begin position="90"/>
        <end position="110"/>
    </location>
</feature>
<feature type="transmembrane region" description="Helical" evidence="1">
    <location>
        <begin position="125"/>
        <end position="145"/>
    </location>
</feature>
<feature type="transmembrane region" description="Helical" evidence="1">
    <location>
        <begin position="174"/>
        <end position="194"/>
    </location>
</feature>
<feature type="transmembrane region" description="Helical" evidence="1">
    <location>
        <begin position="202"/>
        <end position="222"/>
    </location>
</feature>
<feature type="transmembrane region" description="Helical" evidence="1">
    <location>
        <begin position="230"/>
        <end position="250"/>
    </location>
</feature>
<feature type="binding site" evidence="1">
    <location>
        <position position="138"/>
    </location>
    <ligand>
        <name>a 1,2-diacyl-sn-glycero-3-phospho-(1'-sn-glycerol)</name>
        <dbReference type="ChEBI" id="CHEBI:64716"/>
    </ligand>
</feature>
<proteinExistence type="inferred from homology"/>
<sequence length="272" mass="31401">MLTYPNIDPVAIHLGPLQVHWYGLMYLLAFLCAWGLASYRAKQRDGWTSDMVSDLVFYGALGVVLGGRIGYVLFYEFDKFLENPIWLFQVWTGGMSFHGGFLGVMIAMLFWCKKYQKTWFQTLDFIAPCVPTGLMFGRIGNFIGGELYGRAVTDPNYPFGMIFPTDPLHLVRHPSQIYQALCEGLLLFIILWWFSSKPRPRMAVSALFLMGYGVARFVMEFFRQPDADQGFILFGWMTKGQILTVPMLLIGLWMMWYAYQKKIYDWGPQKNS</sequence>